<name>SYC_TRIL1</name>
<reference key="1">
    <citation type="submission" date="2008-05" db="EMBL/GenBank/DDBJ databases">
        <title>Complete sequence of chromosome of Geobacter lovleyi SZ.</title>
        <authorList>
            <consortium name="US DOE Joint Genome Institute"/>
            <person name="Lucas S."/>
            <person name="Copeland A."/>
            <person name="Lapidus A."/>
            <person name="Glavina del Rio T."/>
            <person name="Dalin E."/>
            <person name="Tice H."/>
            <person name="Bruce D."/>
            <person name="Goodwin L."/>
            <person name="Pitluck S."/>
            <person name="Chertkov O."/>
            <person name="Meincke L."/>
            <person name="Brettin T."/>
            <person name="Detter J.C."/>
            <person name="Han C."/>
            <person name="Tapia R."/>
            <person name="Kuske C.R."/>
            <person name="Schmutz J."/>
            <person name="Larimer F."/>
            <person name="Land M."/>
            <person name="Hauser L."/>
            <person name="Kyrpides N."/>
            <person name="Mikhailova N."/>
            <person name="Sung Y."/>
            <person name="Fletcher K.E."/>
            <person name="Ritalahti K.M."/>
            <person name="Loeffler F.E."/>
            <person name="Richardson P."/>
        </authorList>
    </citation>
    <scope>NUCLEOTIDE SEQUENCE [LARGE SCALE GENOMIC DNA]</scope>
    <source>
        <strain>ATCC BAA-1151 / DSM 17278 / SZ</strain>
    </source>
</reference>
<protein>
    <recommendedName>
        <fullName evidence="1">Cysteine--tRNA ligase</fullName>
        <ecNumber evidence="1">6.1.1.16</ecNumber>
    </recommendedName>
    <alternativeName>
        <fullName evidence="1">Cysteinyl-tRNA synthetase</fullName>
        <shortName evidence="1">CysRS</shortName>
    </alternativeName>
</protein>
<feature type="chain" id="PRO_1000090841" description="Cysteine--tRNA ligase">
    <location>
        <begin position="1"/>
        <end position="487"/>
    </location>
</feature>
<feature type="short sequence motif" description="'HIGH' region">
    <location>
        <begin position="31"/>
        <end position="41"/>
    </location>
</feature>
<feature type="short sequence motif" description="'KMSKS' region">
    <location>
        <begin position="266"/>
        <end position="270"/>
    </location>
</feature>
<feature type="binding site" evidence="1">
    <location>
        <position position="29"/>
    </location>
    <ligand>
        <name>Zn(2+)</name>
        <dbReference type="ChEBI" id="CHEBI:29105"/>
    </ligand>
</feature>
<feature type="binding site" evidence="1">
    <location>
        <position position="209"/>
    </location>
    <ligand>
        <name>Zn(2+)</name>
        <dbReference type="ChEBI" id="CHEBI:29105"/>
    </ligand>
</feature>
<feature type="binding site" evidence="1">
    <location>
        <position position="234"/>
    </location>
    <ligand>
        <name>Zn(2+)</name>
        <dbReference type="ChEBI" id="CHEBI:29105"/>
    </ligand>
</feature>
<feature type="binding site" evidence="1">
    <location>
        <position position="238"/>
    </location>
    <ligand>
        <name>Zn(2+)</name>
        <dbReference type="ChEBI" id="CHEBI:29105"/>
    </ligand>
</feature>
<feature type="binding site" evidence="1">
    <location>
        <position position="269"/>
    </location>
    <ligand>
        <name>ATP</name>
        <dbReference type="ChEBI" id="CHEBI:30616"/>
    </ligand>
</feature>
<organism>
    <name type="scientific">Trichlorobacter lovleyi (strain ATCC BAA-1151 / DSM 17278 / SZ)</name>
    <name type="common">Geobacter lovleyi</name>
    <dbReference type="NCBI Taxonomy" id="398767"/>
    <lineage>
        <taxon>Bacteria</taxon>
        <taxon>Pseudomonadati</taxon>
        <taxon>Thermodesulfobacteriota</taxon>
        <taxon>Desulfuromonadia</taxon>
        <taxon>Geobacterales</taxon>
        <taxon>Geobacteraceae</taxon>
        <taxon>Trichlorobacter</taxon>
    </lineage>
</organism>
<accession>B3E1P0</accession>
<keyword id="KW-0030">Aminoacyl-tRNA synthetase</keyword>
<keyword id="KW-0067">ATP-binding</keyword>
<keyword id="KW-0963">Cytoplasm</keyword>
<keyword id="KW-0436">Ligase</keyword>
<keyword id="KW-0479">Metal-binding</keyword>
<keyword id="KW-0547">Nucleotide-binding</keyword>
<keyword id="KW-0648">Protein biosynthesis</keyword>
<keyword id="KW-1185">Reference proteome</keyword>
<keyword id="KW-0862">Zinc</keyword>
<sequence length="487" mass="54991">MALRLYNTLSGEKEPFVPRVAGKVGMYVCGVTVYDFCHIGHARAGIVFDMIYRYLRFSGYDVTYIRNYTDIDDKIINRANQEGTDYRTIADRYIATFDEDMDRLGMLRPTIEPKATDHIEDIISIIQRLIDNGHAYAVDGDVYFAVETFPAYLKLSGRNLDDMLAGARVDVDERKRNPMDFALWKGSKPGEPWWESPWGKGRPGWHIECSAMSMRFLGPSFDIHGGGKDLVFPHHENEIAQSEGANGCQFVKYWLHNGFVNINSEKMSKSLGNFFTIREVLELFDPETLRFFILQAHYRSPLDYSDQNLREAQAGLSRIYEALAALDQALEKPATAIHLPASAAEFAEKVAGLLPRFREAMDDDFNTAQALGTLFDSIRTLNRLLAEGGGSSSASRADLEQLRAAVTEIGAVLGLFRIKPSDWLAAREAEKARHLEISPEEIEGLIVERAAARKNKDFKRSDEIRDYLLSRDIQLVDTPQGTAWKVK</sequence>
<dbReference type="EC" id="6.1.1.16" evidence="1"/>
<dbReference type="EMBL" id="CP001089">
    <property type="protein sequence ID" value="ACD94132.1"/>
    <property type="molecule type" value="Genomic_DNA"/>
</dbReference>
<dbReference type="RefSeq" id="WP_012468489.1">
    <property type="nucleotide sequence ID" value="NC_010814.1"/>
</dbReference>
<dbReference type="SMR" id="B3E1P0"/>
<dbReference type="STRING" id="398767.Glov_0404"/>
<dbReference type="KEGG" id="glo:Glov_0404"/>
<dbReference type="eggNOG" id="COG0215">
    <property type="taxonomic scope" value="Bacteria"/>
</dbReference>
<dbReference type="HOGENOM" id="CLU_013528_0_1_7"/>
<dbReference type="OrthoDB" id="9815130at2"/>
<dbReference type="Proteomes" id="UP000002420">
    <property type="component" value="Chromosome"/>
</dbReference>
<dbReference type="GO" id="GO:0005829">
    <property type="term" value="C:cytosol"/>
    <property type="evidence" value="ECO:0007669"/>
    <property type="project" value="TreeGrafter"/>
</dbReference>
<dbReference type="GO" id="GO:0005524">
    <property type="term" value="F:ATP binding"/>
    <property type="evidence" value="ECO:0007669"/>
    <property type="project" value="UniProtKB-UniRule"/>
</dbReference>
<dbReference type="GO" id="GO:0004817">
    <property type="term" value="F:cysteine-tRNA ligase activity"/>
    <property type="evidence" value="ECO:0007669"/>
    <property type="project" value="UniProtKB-UniRule"/>
</dbReference>
<dbReference type="GO" id="GO:0008270">
    <property type="term" value="F:zinc ion binding"/>
    <property type="evidence" value="ECO:0007669"/>
    <property type="project" value="UniProtKB-UniRule"/>
</dbReference>
<dbReference type="GO" id="GO:0006423">
    <property type="term" value="P:cysteinyl-tRNA aminoacylation"/>
    <property type="evidence" value="ECO:0007669"/>
    <property type="project" value="UniProtKB-UniRule"/>
</dbReference>
<dbReference type="CDD" id="cd00672">
    <property type="entry name" value="CysRS_core"/>
    <property type="match status" value="1"/>
</dbReference>
<dbReference type="FunFam" id="3.40.50.620:FF:000009">
    <property type="entry name" value="Cysteine--tRNA ligase"/>
    <property type="match status" value="1"/>
</dbReference>
<dbReference type="Gene3D" id="1.20.120.1910">
    <property type="entry name" value="Cysteine-tRNA ligase, C-terminal anti-codon recognition domain"/>
    <property type="match status" value="1"/>
</dbReference>
<dbReference type="Gene3D" id="3.40.50.620">
    <property type="entry name" value="HUPs"/>
    <property type="match status" value="1"/>
</dbReference>
<dbReference type="HAMAP" id="MF_00041">
    <property type="entry name" value="Cys_tRNA_synth"/>
    <property type="match status" value="1"/>
</dbReference>
<dbReference type="InterPro" id="IPR015803">
    <property type="entry name" value="Cys-tRNA-ligase"/>
</dbReference>
<dbReference type="InterPro" id="IPR015273">
    <property type="entry name" value="Cys-tRNA-synt_Ia_DALR"/>
</dbReference>
<dbReference type="InterPro" id="IPR024909">
    <property type="entry name" value="Cys-tRNA/MSH_ligase"/>
</dbReference>
<dbReference type="InterPro" id="IPR014729">
    <property type="entry name" value="Rossmann-like_a/b/a_fold"/>
</dbReference>
<dbReference type="InterPro" id="IPR032678">
    <property type="entry name" value="tRNA-synt_1_cat_dom"/>
</dbReference>
<dbReference type="InterPro" id="IPR009080">
    <property type="entry name" value="tRNAsynth_Ia_anticodon-bd"/>
</dbReference>
<dbReference type="NCBIfam" id="TIGR00435">
    <property type="entry name" value="cysS"/>
    <property type="match status" value="1"/>
</dbReference>
<dbReference type="PANTHER" id="PTHR10890:SF3">
    <property type="entry name" value="CYSTEINE--TRNA LIGASE, CYTOPLASMIC"/>
    <property type="match status" value="1"/>
</dbReference>
<dbReference type="PANTHER" id="PTHR10890">
    <property type="entry name" value="CYSTEINYL-TRNA SYNTHETASE"/>
    <property type="match status" value="1"/>
</dbReference>
<dbReference type="Pfam" id="PF09190">
    <property type="entry name" value="DALR_2"/>
    <property type="match status" value="1"/>
</dbReference>
<dbReference type="Pfam" id="PF01406">
    <property type="entry name" value="tRNA-synt_1e"/>
    <property type="match status" value="1"/>
</dbReference>
<dbReference type="PRINTS" id="PR00983">
    <property type="entry name" value="TRNASYNTHCYS"/>
</dbReference>
<dbReference type="SMART" id="SM00840">
    <property type="entry name" value="DALR_2"/>
    <property type="match status" value="1"/>
</dbReference>
<dbReference type="SUPFAM" id="SSF47323">
    <property type="entry name" value="Anticodon-binding domain of a subclass of class I aminoacyl-tRNA synthetases"/>
    <property type="match status" value="1"/>
</dbReference>
<dbReference type="SUPFAM" id="SSF52374">
    <property type="entry name" value="Nucleotidylyl transferase"/>
    <property type="match status" value="1"/>
</dbReference>
<proteinExistence type="inferred from homology"/>
<comment type="catalytic activity">
    <reaction evidence="1">
        <text>tRNA(Cys) + L-cysteine + ATP = L-cysteinyl-tRNA(Cys) + AMP + diphosphate</text>
        <dbReference type="Rhea" id="RHEA:17773"/>
        <dbReference type="Rhea" id="RHEA-COMP:9661"/>
        <dbReference type="Rhea" id="RHEA-COMP:9679"/>
        <dbReference type="ChEBI" id="CHEBI:30616"/>
        <dbReference type="ChEBI" id="CHEBI:33019"/>
        <dbReference type="ChEBI" id="CHEBI:35235"/>
        <dbReference type="ChEBI" id="CHEBI:78442"/>
        <dbReference type="ChEBI" id="CHEBI:78517"/>
        <dbReference type="ChEBI" id="CHEBI:456215"/>
        <dbReference type="EC" id="6.1.1.16"/>
    </reaction>
</comment>
<comment type="cofactor">
    <cofactor evidence="1">
        <name>Zn(2+)</name>
        <dbReference type="ChEBI" id="CHEBI:29105"/>
    </cofactor>
    <text evidence="1">Binds 1 zinc ion per subunit.</text>
</comment>
<comment type="subunit">
    <text evidence="1">Monomer.</text>
</comment>
<comment type="subcellular location">
    <subcellularLocation>
        <location evidence="1">Cytoplasm</location>
    </subcellularLocation>
</comment>
<comment type="similarity">
    <text evidence="1">Belongs to the class-I aminoacyl-tRNA synthetase family.</text>
</comment>
<evidence type="ECO:0000255" key="1">
    <source>
        <dbReference type="HAMAP-Rule" id="MF_00041"/>
    </source>
</evidence>
<gene>
    <name evidence="1" type="primary">cysS</name>
    <name type="ordered locus">Glov_0404</name>
</gene>